<evidence type="ECO:0000250" key="1">
    <source>
        <dbReference type="UniProtKB" id="Q5EXK1"/>
    </source>
</evidence>
<evidence type="ECO:0000269" key="2">
    <source>
    </source>
</evidence>
<evidence type="ECO:0000303" key="3">
    <source>
    </source>
</evidence>
<evidence type="ECO:0000305" key="4"/>
<evidence type="ECO:0000312" key="5">
    <source>
        <dbReference type="Araport" id="AT4G38540"/>
    </source>
</evidence>
<evidence type="ECO:0000312" key="6">
    <source>
        <dbReference type="EMBL" id="AEE86944.1"/>
    </source>
</evidence>
<comment type="cofactor">
    <cofactor evidence="1">
        <name>FAD</name>
        <dbReference type="ChEBI" id="CHEBI:57692"/>
    </cofactor>
</comment>
<comment type="subunit">
    <text evidence="1">Monomer.</text>
</comment>
<comment type="tissue specificity">
    <text evidence="2">Expressed in seeds, seedlings, roots, leaves, flowers, pollen and siliques.</text>
</comment>
<comment type="similarity">
    <text evidence="4">Belongs to the 3-hydroxybenzoate 6-hydroxylase family.</text>
</comment>
<comment type="sequence caution" evidence="4">
    <conflict type="erroneous initiation">
        <sequence resource="EMBL-CDS" id="AAK59785"/>
    </conflict>
    <text>Truncated N-terminus.</text>
</comment>
<keyword id="KW-0274">FAD</keyword>
<keyword id="KW-0285">Flavoprotein</keyword>
<keyword id="KW-0503">Monooxygenase</keyword>
<keyword id="KW-0560">Oxidoreductase</keyword>
<keyword id="KW-1185">Reference proteome</keyword>
<feature type="chain" id="PRO_0000441115" description="Monooxygenase 2">
    <location>
        <begin position="1"/>
        <end position="407"/>
    </location>
</feature>
<feature type="sequence conflict" description="In Ref. 4; AAK59785." evidence="4" ref="4">
    <original>N</original>
    <variation>D</variation>
    <location>
        <position position="242"/>
    </location>
</feature>
<name>MO2_ARATH</name>
<gene>
    <name evidence="3" type="primary">MO2</name>
    <name evidence="5" type="ordered locus">At4g38540</name>
    <name evidence="6" type="ORF">F20M13.100</name>
</gene>
<dbReference type="EC" id="1.14.13.-"/>
<dbReference type="EMBL" id="AJ007588">
    <property type="protein sequence ID" value="CAA07575.1"/>
    <property type="molecule type" value="mRNA"/>
</dbReference>
<dbReference type="EMBL" id="AL035540">
    <property type="protein sequence ID" value="CAB37510.1"/>
    <property type="molecule type" value="Genomic_DNA"/>
</dbReference>
<dbReference type="EMBL" id="AL161593">
    <property type="protein sequence ID" value="CAB80518.1"/>
    <property type="molecule type" value="Genomic_DNA"/>
</dbReference>
<dbReference type="EMBL" id="CP002687">
    <property type="protein sequence ID" value="AEE86944.1"/>
    <property type="molecule type" value="Genomic_DNA"/>
</dbReference>
<dbReference type="EMBL" id="AY037200">
    <property type="protein sequence ID" value="AAK59785.1"/>
    <property type="status" value="ALT_INIT"/>
    <property type="molecule type" value="mRNA"/>
</dbReference>
<dbReference type="EMBL" id="BT003036">
    <property type="protein sequence ID" value="AAO23601.1"/>
    <property type="molecule type" value="mRNA"/>
</dbReference>
<dbReference type="PIR" id="T05682">
    <property type="entry name" value="T05682"/>
</dbReference>
<dbReference type="RefSeq" id="NP_195566.1">
    <property type="nucleotide sequence ID" value="NM_120015.3"/>
</dbReference>
<dbReference type="SMR" id="O81816"/>
<dbReference type="FunCoup" id="O81816">
    <property type="interactions" value="85"/>
</dbReference>
<dbReference type="STRING" id="3702.O81816"/>
<dbReference type="iPTMnet" id="O81816"/>
<dbReference type="SwissPalm" id="O81816"/>
<dbReference type="PaxDb" id="3702-AT4G38540.1"/>
<dbReference type="ProteomicsDB" id="251325"/>
<dbReference type="DNASU" id="830011"/>
<dbReference type="EnsemblPlants" id="AT4G38540.1">
    <property type="protein sequence ID" value="AT4G38540.1"/>
    <property type="gene ID" value="AT4G38540"/>
</dbReference>
<dbReference type="GeneID" id="830011"/>
<dbReference type="Gramene" id="AT4G38540.1">
    <property type="protein sequence ID" value="AT4G38540.1"/>
    <property type="gene ID" value="AT4G38540"/>
</dbReference>
<dbReference type="KEGG" id="ath:AT4G38540"/>
<dbReference type="Araport" id="AT4G38540"/>
<dbReference type="TAIR" id="AT4G38540"/>
<dbReference type="eggNOG" id="KOG2614">
    <property type="taxonomic scope" value="Eukaryota"/>
</dbReference>
<dbReference type="HOGENOM" id="CLU_009665_10_2_1"/>
<dbReference type="InParanoid" id="O81816"/>
<dbReference type="OMA" id="VTHGKEM"/>
<dbReference type="OrthoDB" id="655030at2759"/>
<dbReference type="PhylomeDB" id="O81816"/>
<dbReference type="PRO" id="PR:O81816"/>
<dbReference type="Proteomes" id="UP000006548">
    <property type="component" value="Chromosome 4"/>
</dbReference>
<dbReference type="ExpressionAtlas" id="O81816">
    <property type="expression patterns" value="baseline and differential"/>
</dbReference>
<dbReference type="GO" id="GO:0005886">
    <property type="term" value="C:plasma membrane"/>
    <property type="evidence" value="ECO:0007005"/>
    <property type="project" value="TAIR"/>
</dbReference>
<dbReference type="GO" id="GO:0071949">
    <property type="term" value="F:FAD binding"/>
    <property type="evidence" value="ECO:0007669"/>
    <property type="project" value="InterPro"/>
</dbReference>
<dbReference type="GO" id="GO:0004497">
    <property type="term" value="F:monooxygenase activity"/>
    <property type="evidence" value="ECO:0007669"/>
    <property type="project" value="UniProtKB-KW"/>
</dbReference>
<dbReference type="GO" id="GO:0002239">
    <property type="term" value="P:response to oomycetes"/>
    <property type="evidence" value="ECO:0000270"/>
    <property type="project" value="TAIR"/>
</dbReference>
<dbReference type="FunFam" id="3.50.50.60:FF:000875">
    <property type="entry name" value="Monooxygenase 2"/>
    <property type="match status" value="1"/>
</dbReference>
<dbReference type="Gene3D" id="3.50.50.60">
    <property type="entry name" value="FAD/NAD(P)-binding domain"/>
    <property type="match status" value="1"/>
</dbReference>
<dbReference type="InterPro" id="IPR002938">
    <property type="entry name" value="FAD-bd"/>
</dbReference>
<dbReference type="InterPro" id="IPR036188">
    <property type="entry name" value="FAD/NAD-bd_sf"/>
</dbReference>
<dbReference type="InterPro" id="IPR044560">
    <property type="entry name" value="MOase"/>
</dbReference>
<dbReference type="PANTHER" id="PTHR45934">
    <property type="entry name" value="FAD/NAD(P)-BINDING OXIDOREDUCTASE FAMILY PROTEIN"/>
    <property type="match status" value="1"/>
</dbReference>
<dbReference type="PANTHER" id="PTHR45934:SF20">
    <property type="entry name" value="MONOOXYGENASE 2-RELATED"/>
    <property type="match status" value="1"/>
</dbReference>
<dbReference type="Pfam" id="PF01494">
    <property type="entry name" value="FAD_binding_3"/>
    <property type="match status" value="1"/>
</dbReference>
<dbReference type="PRINTS" id="PR00420">
    <property type="entry name" value="RNGMNOXGNASE"/>
</dbReference>
<dbReference type="SUPFAM" id="SSF51905">
    <property type="entry name" value="FAD/NAD(P)-binding domain"/>
    <property type="match status" value="1"/>
</dbReference>
<accession>O81816</accession>
<accession>Q94C29</accession>
<proteinExistence type="evidence at transcript level"/>
<protein>
    <recommendedName>
        <fullName evidence="3">Monooxygenase 2</fullName>
        <shortName evidence="3">AtMO2</shortName>
        <ecNumber>1.14.13.-</ecNumber>
    </recommendedName>
</protein>
<organism>
    <name type="scientific">Arabidopsis thaliana</name>
    <name type="common">Mouse-ear cress</name>
    <dbReference type="NCBI Taxonomy" id="3702"/>
    <lineage>
        <taxon>Eukaryota</taxon>
        <taxon>Viridiplantae</taxon>
        <taxon>Streptophyta</taxon>
        <taxon>Embryophyta</taxon>
        <taxon>Tracheophyta</taxon>
        <taxon>Spermatophyta</taxon>
        <taxon>Magnoliopsida</taxon>
        <taxon>eudicotyledons</taxon>
        <taxon>Gunneridae</taxon>
        <taxon>Pentapetalae</taxon>
        <taxon>rosids</taxon>
        <taxon>malvids</taxon>
        <taxon>Brassicales</taxon>
        <taxon>Brassicaceae</taxon>
        <taxon>Camelineae</taxon>
        <taxon>Arabidopsis</taxon>
    </lineage>
</organism>
<sequence length="407" mass="45505">MEEEGSPDIIIVGAGISGLSTAVGLHRLGIRSMVLESSETLRATGFAFTTWFNAWKAMEALGVSQHIRSLHDRLEGWVVGTISAGTPPTEMLFPESEEYESRCVQRKLLLEALAGELPEETIRFSSKVVHIELSGCYKKVHLSDGTILKTKVLVGCDGVYSVVGKWLGFKNPATTARLAIRGLTHFPEGHGFGKRFFQFYGDGVRSGFIPCDHNTVYWFLTHTSTDIDEETNSEILKEFVLNKIKDLPENIKNVVETTDLDSMVMSQLKYRPPWELLWSNITKDNVCVAGDALHPMTPDIGQGGCSAMEDGVILARCLGEAIKAKSLKGETEENEEEGYKRIEEGLKKYAGERKWRSIDLITTAYTVGFIQQSRGKWMNMFRDRFLSSYLSRMLLKKSHFDCGSLVP</sequence>
<reference key="1">
    <citation type="journal article" date="1999" name="Gene">
        <title>Structure and expression of three src2 homologues and a novel subfamily of flavoprotein monooxygenase genes revealed by the analysis of a 25kb fragment from Arabidopsis thaliana chromosome IV.</title>
        <authorList>
            <person name="Aubourg S."/>
            <person name="Picaud A."/>
            <person name="Kreis M."/>
            <person name="Lecharny A."/>
        </authorList>
    </citation>
    <scope>NUCLEOTIDE SEQUENCE [MRNA]</scope>
    <scope>TISSUE SPECIFICITY</scope>
    <scope>GENE FAMILY</scope>
    <scope>NOMENCLATURE</scope>
    <source>
        <strain>cv. Columbia</strain>
    </source>
</reference>
<reference key="2">
    <citation type="journal article" date="1999" name="Nature">
        <title>Sequence and analysis of chromosome 4 of the plant Arabidopsis thaliana.</title>
        <authorList>
            <person name="Mayer K.F.X."/>
            <person name="Schueller C."/>
            <person name="Wambutt R."/>
            <person name="Murphy G."/>
            <person name="Volckaert G."/>
            <person name="Pohl T."/>
            <person name="Duesterhoeft A."/>
            <person name="Stiekema W."/>
            <person name="Entian K.-D."/>
            <person name="Terryn N."/>
            <person name="Harris B."/>
            <person name="Ansorge W."/>
            <person name="Brandt P."/>
            <person name="Grivell L.A."/>
            <person name="Rieger M."/>
            <person name="Weichselgartner M."/>
            <person name="de Simone V."/>
            <person name="Obermaier B."/>
            <person name="Mache R."/>
            <person name="Mueller M."/>
            <person name="Kreis M."/>
            <person name="Delseny M."/>
            <person name="Puigdomenech P."/>
            <person name="Watson M."/>
            <person name="Schmidtheini T."/>
            <person name="Reichert B."/>
            <person name="Portetelle D."/>
            <person name="Perez-Alonso M."/>
            <person name="Boutry M."/>
            <person name="Bancroft I."/>
            <person name="Vos P."/>
            <person name="Hoheisel J."/>
            <person name="Zimmermann W."/>
            <person name="Wedler H."/>
            <person name="Ridley P."/>
            <person name="Langham S.-A."/>
            <person name="McCullagh B."/>
            <person name="Bilham L."/>
            <person name="Robben J."/>
            <person name="van der Schueren J."/>
            <person name="Grymonprez B."/>
            <person name="Chuang Y.-J."/>
            <person name="Vandenbussche F."/>
            <person name="Braeken M."/>
            <person name="Weltjens I."/>
            <person name="Voet M."/>
            <person name="Bastiaens I."/>
            <person name="Aert R."/>
            <person name="Defoor E."/>
            <person name="Weitzenegger T."/>
            <person name="Bothe G."/>
            <person name="Ramsperger U."/>
            <person name="Hilbert H."/>
            <person name="Braun M."/>
            <person name="Holzer E."/>
            <person name="Brandt A."/>
            <person name="Peters S."/>
            <person name="van Staveren M."/>
            <person name="Dirkse W."/>
            <person name="Mooijman P."/>
            <person name="Klein Lankhorst R."/>
            <person name="Rose M."/>
            <person name="Hauf J."/>
            <person name="Koetter P."/>
            <person name="Berneiser S."/>
            <person name="Hempel S."/>
            <person name="Feldpausch M."/>
            <person name="Lamberth S."/>
            <person name="Van den Daele H."/>
            <person name="De Keyser A."/>
            <person name="Buysshaert C."/>
            <person name="Gielen J."/>
            <person name="Villarroel R."/>
            <person name="De Clercq R."/>
            <person name="van Montagu M."/>
            <person name="Rogers J."/>
            <person name="Cronin A."/>
            <person name="Quail M.A."/>
            <person name="Bray-Allen S."/>
            <person name="Clark L."/>
            <person name="Doggett J."/>
            <person name="Hall S."/>
            <person name="Kay M."/>
            <person name="Lennard N."/>
            <person name="McLay K."/>
            <person name="Mayes R."/>
            <person name="Pettett A."/>
            <person name="Rajandream M.A."/>
            <person name="Lyne M."/>
            <person name="Benes V."/>
            <person name="Rechmann S."/>
            <person name="Borkova D."/>
            <person name="Bloecker H."/>
            <person name="Scharfe M."/>
            <person name="Grimm M."/>
            <person name="Loehnert T.-H."/>
            <person name="Dose S."/>
            <person name="de Haan M."/>
            <person name="Maarse A.C."/>
            <person name="Schaefer M."/>
            <person name="Mueller-Auer S."/>
            <person name="Gabel C."/>
            <person name="Fuchs M."/>
            <person name="Fartmann B."/>
            <person name="Granderath K."/>
            <person name="Dauner D."/>
            <person name="Herzl A."/>
            <person name="Neumann S."/>
            <person name="Argiriou A."/>
            <person name="Vitale D."/>
            <person name="Liguori R."/>
            <person name="Piravandi E."/>
            <person name="Massenet O."/>
            <person name="Quigley F."/>
            <person name="Clabauld G."/>
            <person name="Muendlein A."/>
            <person name="Felber R."/>
            <person name="Schnabl S."/>
            <person name="Hiller R."/>
            <person name="Schmidt W."/>
            <person name="Lecharny A."/>
            <person name="Aubourg S."/>
            <person name="Chefdor F."/>
            <person name="Cooke R."/>
            <person name="Berger C."/>
            <person name="Monfort A."/>
            <person name="Casacuberta E."/>
            <person name="Gibbons T."/>
            <person name="Weber N."/>
            <person name="Vandenbol M."/>
            <person name="Bargues M."/>
            <person name="Terol J."/>
            <person name="Torres A."/>
            <person name="Perez-Perez A."/>
            <person name="Purnelle B."/>
            <person name="Bent E."/>
            <person name="Johnson S."/>
            <person name="Tacon D."/>
            <person name="Jesse T."/>
            <person name="Heijnen L."/>
            <person name="Schwarz S."/>
            <person name="Scholler P."/>
            <person name="Heber S."/>
            <person name="Francs P."/>
            <person name="Bielke C."/>
            <person name="Frishman D."/>
            <person name="Haase D."/>
            <person name="Lemcke K."/>
            <person name="Mewes H.-W."/>
            <person name="Stocker S."/>
            <person name="Zaccaria P."/>
            <person name="Bevan M."/>
            <person name="Wilson R.K."/>
            <person name="de la Bastide M."/>
            <person name="Habermann K."/>
            <person name="Parnell L."/>
            <person name="Dedhia N."/>
            <person name="Gnoj L."/>
            <person name="Schutz K."/>
            <person name="Huang E."/>
            <person name="Spiegel L."/>
            <person name="Sekhon M."/>
            <person name="Murray J."/>
            <person name="Sheet P."/>
            <person name="Cordes M."/>
            <person name="Abu-Threideh J."/>
            <person name="Stoneking T."/>
            <person name="Kalicki J."/>
            <person name="Graves T."/>
            <person name="Harmon G."/>
            <person name="Edwards J."/>
            <person name="Latreille P."/>
            <person name="Courtney L."/>
            <person name="Cloud J."/>
            <person name="Abbott A."/>
            <person name="Scott K."/>
            <person name="Johnson D."/>
            <person name="Minx P."/>
            <person name="Bentley D."/>
            <person name="Fulton B."/>
            <person name="Miller N."/>
            <person name="Greco T."/>
            <person name="Kemp K."/>
            <person name="Kramer J."/>
            <person name="Fulton L."/>
            <person name="Mardis E."/>
            <person name="Dante M."/>
            <person name="Pepin K."/>
            <person name="Hillier L.W."/>
            <person name="Nelson J."/>
            <person name="Spieth J."/>
            <person name="Ryan E."/>
            <person name="Andrews S."/>
            <person name="Geisel C."/>
            <person name="Layman D."/>
            <person name="Du H."/>
            <person name="Ali J."/>
            <person name="Berghoff A."/>
            <person name="Jones K."/>
            <person name="Drone K."/>
            <person name="Cotton M."/>
            <person name="Joshu C."/>
            <person name="Antonoiu B."/>
            <person name="Zidanic M."/>
            <person name="Strong C."/>
            <person name="Sun H."/>
            <person name="Lamar B."/>
            <person name="Yordan C."/>
            <person name="Ma P."/>
            <person name="Zhong J."/>
            <person name="Preston R."/>
            <person name="Vil D."/>
            <person name="Shekher M."/>
            <person name="Matero A."/>
            <person name="Shah R."/>
            <person name="Swaby I.K."/>
            <person name="O'Shaughnessy A."/>
            <person name="Rodriguez M."/>
            <person name="Hoffman J."/>
            <person name="Till S."/>
            <person name="Granat S."/>
            <person name="Shohdy N."/>
            <person name="Hasegawa A."/>
            <person name="Hameed A."/>
            <person name="Lodhi M."/>
            <person name="Johnson A."/>
            <person name="Chen E."/>
            <person name="Marra M.A."/>
            <person name="Martienssen R."/>
            <person name="McCombie W.R."/>
        </authorList>
    </citation>
    <scope>NUCLEOTIDE SEQUENCE [LARGE SCALE GENOMIC DNA]</scope>
    <source>
        <strain>cv. Columbia</strain>
    </source>
</reference>
<reference key="3">
    <citation type="journal article" date="2017" name="Plant J.">
        <title>Araport11: a complete reannotation of the Arabidopsis thaliana reference genome.</title>
        <authorList>
            <person name="Cheng C.Y."/>
            <person name="Krishnakumar V."/>
            <person name="Chan A.P."/>
            <person name="Thibaud-Nissen F."/>
            <person name="Schobel S."/>
            <person name="Town C.D."/>
        </authorList>
    </citation>
    <scope>GENOME REANNOTATION</scope>
    <source>
        <strain>cv. Columbia</strain>
    </source>
</reference>
<reference key="4">
    <citation type="journal article" date="2003" name="Science">
        <title>Empirical analysis of transcriptional activity in the Arabidopsis genome.</title>
        <authorList>
            <person name="Yamada K."/>
            <person name="Lim J."/>
            <person name="Dale J.M."/>
            <person name="Chen H."/>
            <person name="Shinn P."/>
            <person name="Palm C.J."/>
            <person name="Southwick A.M."/>
            <person name="Wu H.C."/>
            <person name="Kim C.J."/>
            <person name="Nguyen M."/>
            <person name="Pham P.K."/>
            <person name="Cheuk R.F."/>
            <person name="Karlin-Newmann G."/>
            <person name="Liu S.X."/>
            <person name="Lam B."/>
            <person name="Sakano H."/>
            <person name="Wu T."/>
            <person name="Yu G."/>
            <person name="Miranda M."/>
            <person name="Quach H.L."/>
            <person name="Tripp M."/>
            <person name="Chang C.H."/>
            <person name="Lee J.M."/>
            <person name="Toriumi M.J."/>
            <person name="Chan M.M."/>
            <person name="Tang C.C."/>
            <person name="Onodera C.S."/>
            <person name="Deng J.M."/>
            <person name="Akiyama K."/>
            <person name="Ansari Y."/>
            <person name="Arakawa T."/>
            <person name="Banh J."/>
            <person name="Banno F."/>
            <person name="Bowser L."/>
            <person name="Brooks S.Y."/>
            <person name="Carninci P."/>
            <person name="Chao Q."/>
            <person name="Choy N."/>
            <person name="Enju A."/>
            <person name="Goldsmith A.D."/>
            <person name="Gurjal M."/>
            <person name="Hansen N.F."/>
            <person name="Hayashizaki Y."/>
            <person name="Johnson-Hopson C."/>
            <person name="Hsuan V.W."/>
            <person name="Iida K."/>
            <person name="Karnes M."/>
            <person name="Khan S."/>
            <person name="Koesema E."/>
            <person name="Ishida J."/>
            <person name="Jiang P.X."/>
            <person name="Jones T."/>
            <person name="Kawai J."/>
            <person name="Kamiya A."/>
            <person name="Meyers C."/>
            <person name="Nakajima M."/>
            <person name="Narusaka M."/>
            <person name="Seki M."/>
            <person name="Sakurai T."/>
            <person name="Satou M."/>
            <person name="Tamse R."/>
            <person name="Vaysberg M."/>
            <person name="Wallender E.K."/>
            <person name="Wong C."/>
            <person name="Yamamura Y."/>
            <person name="Yuan S."/>
            <person name="Shinozaki K."/>
            <person name="Davis R.W."/>
            <person name="Theologis A."/>
            <person name="Ecker J.R."/>
        </authorList>
    </citation>
    <scope>NUCLEOTIDE SEQUENCE [LARGE SCALE MRNA] OF 189-407</scope>
    <source>
        <strain>cv. Columbia</strain>
    </source>
</reference>